<name>MYCT1_DANRE</name>
<sequence>MADNSTHPIMKILESFGLTDVILAFFLSMVVGLLLGALVYMILTWMSRRRASATITRIPVHQSRSTTRSSSPRSRLGYSRHSSGYDRRSNNSLASAAFSFHRQTSSSPIDYGDSTGRKSSFRASTFHPLLQCSQIAREAEEGAQGSLPRTPTLTTSPGAAGSTSTVSSMITPPRARNRPDSFWGNSNLRGFHAGQTPPPAYDSIIRAYQETTT</sequence>
<comment type="subcellular location">
    <subcellularLocation>
        <location evidence="1">Nucleus</location>
    </subcellularLocation>
</comment>
<comment type="similarity">
    <text evidence="4">Belongs to the MYCT1 family.</text>
</comment>
<gene>
    <name type="primary">myct1</name>
    <name type="ORF">si:dkey-12h9.2</name>
</gene>
<protein>
    <recommendedName>
        <fullName>Myc target protein 1 homolog</fullName>
    </recommendedName>
</protein>
<accession>Q5SNQ9</accession>
<reference key="1">
    <citation type="journal article" date="2013" name="Nature">
        <title>The zebrafish reference genome sequence and its relationship to the human genome.</title>
        <authorList>
            <person name="Howe K."/>
            <person name="Clark M.D."/>
            <person name="Torroja C.F."/>
            <person name="Torrance J."/>
            <person name="Berthelot C."/>
            <person name="Muffato M."/>
            <person name="Collins J.E."/>
            <person name="Humphray S."/>
            <person name="McLaren K."/>
            <person name="Matthews L."/>
            <person name="McLaren S."/>
            <person name="Sealy I."/>
            <person name="Caccamo M."/>
            <person name="Churcher C."/>
            <person name="Scott C."/>
            <person name="Barrett J.C."/>
            <person name="Koch R."/>
            <person name="Rauch G.J."/>
            <person name="White S."/>
            <person name="Chow W."/>
            <person name="Kilian B."/>
            <person name="Quintais L.T."/>
            <person name="Guerra-Assuncao J.A."/>
            <person name="Zhou Y."/>
            <person name="Gu Y."/>
            <person name="Yen J."/>
            <person name="Vogel J.H."/>
            <person name="Eyre T."/>
            <person name="Redmond S."/>
            <person name="Banerjee R."/>
            <person name="Chi J."/>
            <person name="Fu B."/>
            <person name="Langley E."/>
            <person name="Maguire S.F."/>
            <person name="Laird G.K."/>
            <person name="Lloyd D."/>
            <person name="Kenyon E."/>
            <person name="Donaldson S."/>
            <person name="Sehra H."/>
            <person name="Almeida-King J."/>
            <person name="Loveland J."/>
            <person name="Trevanion S."/>
            <person name="Jones M."/>
            <person name="Quail M."/>
            <person name="Willey D."/>
            <person name="Hunt A."/>
            <person name="Burton J."/>
            <person name="Sims S."/>
            <person name="McLay K."/>
            <person name="Plumb B."/>
            <person name="Davis J."/>
            <person name="Clee C."/>
            <person name="Oliver K."/>
            <person name="Clark R."/>
            <person name="Riddle C."/>
            <person name="Elliot D."/>
            <person name="Threadgold G."/>
            <person name="Harden G."/>
            <person name="Ware D."/>
            <person name="Begum S."/>
            <person name="Mortimore B."/>
            <person name="Kerry G."/>
            <person name="Heath P."/>
            <person name="Phillimore B."/>
            <person name="Tracey A."/>
            <person name="Corby N."/>
            <person name="Dunn M."/>
            <person name="Johnson C."/>
            <person name="Wood J."/>
            <person name="Clark S."/>
            <person name="Pelan S."/>
            <person name="Griffiths G."/>
            <person name="Smith M."/>
            <person name="Glithero R."/>
            <person name="Howden P."/>
            <person name="Barker N."/>
            <person name="Lloyd C."/>
            <person name="Stevens C."/>
            <person name="Harley J."/>
            <person name="Holt K."/>
            <person name="Panagiotidis G."/>
            <person name="Lovell J."/>
            <person name="Beasley H."/>
            <person name="Henderson C."/>
            <person name="Gordon D."/>
            <person name="Auger K."/>
            <person name="Wright D."/>
            <person name="Collins J."/>
            <person name="Raisen C."/>
            <person name="Dyer L."/>
            <person name="Leung K."/>
            <person name="Robertson L."/>
            <person name="Ambridge K."/>
            <person name="Leongamornlert D."/>
            <person name="McGuire S."/>
            <person name="Gilderthorp R."/>
            <person name="Griffiths C."/>
            <person name="Manthravadi D."/>
            <person name="Nichol S."/>
            <person name="Barker G."/>
            <person name="Whitehead S."/>
            <person name="Kay M."/>
            <person name="Brown J."/>
            <person name="Murnane C."/>
            <person name="Gray E."/>
            <person name="Humphries M."/>
            <person name="Sycamore N."/>
            <person name="Barker D."/>
            <person name="Saunders D."/>
            <person name="Wallis J."/>
            <person name="Babbage A."/>
            <person name="Hammond S."/>
            <person name="Mashreghi-Mohammadi M."/>
            <person name="Barr L."/>
            <person name="Martin S."/>
            <person name="Wray P."/>
            <person name="Ellington A."/>
            <person name="Matthews N."/>
            <person name="Ellwood M."/>
            <person name="Woodmansey R."/>
            <person name="Clark G."/>
            <person name="Cooper J."/>
            <person name="Tromans A."/>
            <person name="Grafham D."/>
            <person name="Skuce C."/>
            <person name="Pandian R."/>
            <person name="Andrews R."/>
            <person name="Harrison E."/>
            <person name="Kimberley A."/>
            <person name="Garnett J."/>
            <person name="Fosker N."/>
            <person name="Hall R."/>
            <person name="Garner P."/>
            <person name="Kelly D."/>
            <person name="Bird C."/>
            <person name="Palmer S."/>
            <person name="Gehring I."/>
            <person name="Berger A."/>
            <person name="Dooley C.M."/>
            <person name="Ersan-Urun Z."/>
            <person name="Eser C."/>
            <person name="Geiger H."/>
            <person name="Geisler M."/>
            <person name="Karotki L."/>
            <person name="Kirn A."/>
            <person name="Konantz J."/>
            <person name="Konantz M."/>
            <person name="Oberlander M."/>
            <person name="Rudolph-Geiger S."/>
            <person name="Teucke M."/>
            <person name="Lanz C."/>
            <person name="Raddatz G."/>
            <person name="Osoegawa K."/>
            <person name="Zhu B."/>
            <person name="Rapp A."/>
            <person name="Widaa S."/>
            <person name="Langford C."/>
            <person name="Yang F."/>
            <person name="Schuster S.C."/>
            <person name="Carter N.P."/>
            <person name="Harrow J."/>
            <person name="Ning Z."/>
            <person name="Herrero J."/>
            <person name="Searle S.M."/>
            <person name="Enright A."/>
            <person name="Geisler R."/>
            <person name="Plasterk R.H."/>
            <person name="Lee C."/>
            <person name="Westerfield M."/>
            <person name="de Jong P.J."/>
            <person name="Zon L.I."/>
            <person name="Postlethwait J.H."/>
            <person name="Nusslein-Volhard C."/>
            <person name="Hubbard T.J."/>
            <person name="Roest Crollius H."/>
            <person name="Rogers J."/>
            <person name="Stemple D.L."/>
        </authorList>
    </citation>
    <scope>NUCLEOTIDE SEQUENCE [LARGE SCALE GENOMIC DNA]</scope>
    <source>
        <strain>Tuebingen</strain>
    </source>
</reference>
<keyword id="KW-0539">Nucleus</keyword>
<keyword id="KW-1185">Reference proteome</keyword>
<proteinExistence type="inferred from homology"/>
<feature type="chain" id="PRO_0000310961" description="Myc target protein 1 homolog">
    <location>
        <begin position="1"/>
        <end position="213"/>
    </location>
</feature>
<feature type="region of interest" description="Disordered" evidence="3">
    <location>
        <begin position="59"/>
        <end position="89"/>
    </location>
</feature>
<feature type="region of interest" description="Disordered" evidence="3">
    <location>
        <begin position="139"/>
        <end position="201"/>
    </location>
</feature>
<feature type="short sequence motif" description="Bipartite nuclear localization signal" evidence="2">
    <location>
        <begin position="48"/>
        <end position="68"/>
    </location>
</feature>
<feature type="compositionally biased region" description="Low complexity" evidence="3">
    <location>
        <begin position="63"/>
        <end position="75"/>
    </location>
</feature>
<feature type="compositionally biased region" description="Low complexity" evidence="3">
    <location>
        <begin position="146"/>
        <end position="168"/>
    </location>
</feature>
<dbReference type="EMBL" id="AL954831">
    <property type="protein sequence ID" value="CAI20611.1"/>
    <property type="molecule type" value="Genomic_DNA"/>
</dbReference>
<dbReference type="RefSeq" id="NP_001076386.1">
    <property type="nucleotide sequence ID" value="NM_001082917.1"/>
</dbReference>
<dbReference type="SMR" id="Q5SNQ9"/>
<dbReference type="FunCoup" id="Q5SNQ9">
    <property type="interactions" value="975"/>
</dbReference>
<dbReference type="STRING" id="7955.ENSDARP00000073020"/>
<dbReference type="PaxDb" id="7955-ENSDARP00000073020"/>
<dbReference type="Ensembl" id="ENSDART00000078559">
    <property type="protein sequence ID" value="ENSDARP00000073020"/>
    <property type="gene ID" value="ENSDARG00000056125"/>
</dbReference>
<dbReference type="GeneID" id="796556"/>
<dbReference type="KEGG" id="dre:796556"/>
<dbReference type="AGR" id="ZFIN:ZDB-GENE-041001-143"/>
<dbReference type="CTD" id="796556"/>
<dbReference type="ZFIN" id="ZDB-GENE-041001-143">
    <property type="gene designation" value="myct1a"/>
</dbReference>
<dbReference type="eggNOG" id="ENOG502RXWU">
    <property type="taxonomic scope" value="Eukaryota"/>
</dbReference>
<dbReference type="HOGENOM" id="CLU_104680_0_0_1"/>
<dbReference type="InParanoid" id="Q5SNQ9"/>
<dbReference type="OMA" id="SFWGNNG"/>
<dbReference type="OrthoDB" id="9943706at2759"/>
<dbReference type="PhylomeDB" id="Q5SNQ9"/>
<dbReference type="TreeFam" id="TF333196"/>
<dbReference type="PRO" id="PR:Q5SNQ9"/>
<dbReference type="Proteomes" id="UP000000437">
    <property type="component" value="Alternate scaffold 20"/>
</dbReference>
<dbReference type="Proteomes" id="UP000000437">
    <property type="component" value="Chromosome 20"/>
</dbReference>
<dbReference type="Bgee" id="ENSDARG00000056125">
    <property type="expression patterns" value="Expressed in spleen and 16 other cell types or tissues"/>
</dbReference>
<dbReference type="GO" id="GO:0005654">
    <property type="term" value="C:nucleoplasm"/>
    <property type="evidence" value="ECO:0000318"/>
    <property type="project" value="GO_Central"/>
</dbReference>
<dbReference type="GO" id="GO:0035162">
    <property type="term" value="P:embryonic hemopoiesis"/>
    <property type="evidence" value="ECO:0000315"/>
    <property type="project" value="ZFIN"/>
</dbReference>
<dbReference type="InterPro" id="IPR029180">
    <property type="entry name" value="Myc_target_1"/>
</dbReference>
<dbReference type="PANTHER" id="PTHR14869">
    <property type="entry name" value="MYC TARGET PROTEIN 1"/>
    <property type="match status" value="1"/>
</dbReference>
<dbReference type="PANTHER" id="PTHR14869:SF0">
    <property type="entry name" value="MYC TARGET PROTEIN 1"/>
    <property type="match status" value="1"/>
</dbReference>
<dbReference type="Pfam" id="PF15179">
    <property type="entry name" value="Myc_target_1"/>
    <property type="match status" value="1"/>
</dbReference>
<evidence type="ECO:0000250" key="1"/>
<evidence type="ECO:0000255" key="2"/>
<evidence type="ECO:0000256" key="3">
    <source>
        <dbReference type="SAM" id="MobiDB-lite"/>
    </source>
</evidence>
<evidence type="ECO:0000305" key="4"/>
<organism>
    <name type="scientific">Danio rerio</name>
    <name type="common">Zebrafish</name>
    <name type="synonym">Brachydanio rerio</name>
    <dbReference type="NCBI Taxonomy" id="7955"/>
    <lineage>
        <taxon>Eukaryota</taxon>
        <taxon>Metazoa</taxon>
        <taxon>Chordata</taxon>
        <taxon>Craniata</taxon>
        <taxon>Vertebrata</taxon>
        <taxon>Euteleostomi</taxon>
        <taxon>Actinopterygii</taxon>
        <taxon>Neopterygii</taxon>
        <taxon>Teleostei</taxon>
        <taxon>Ostariophysi</taxon>
        <taxon>Cypriniformes</taxon>
        <taxon>Danionidae</taxon>
        <taxon>Danioninae</taxon>
        <taxon>Danio</taxon>
    </lineage>
</organism>